<dbReference type="EC" id="2.5.1.19" evidence="1"/>
<dbReference type="EMBL" id="DQ489736">
    <property type="protein sequence ID" value="ACA82533.1"/>
    <property type="molecule type" value="Genomic_DNA"/>
</dbReference>
<dbReference type="RefSeq" id="WP_004904055.1">
    <property type="nucleotide sequence ID" value="NC_010471.1"/>
</dbReference>
<dbReference type="SMR" id="B1MYD1"/>
<dbReference type="STRING" id="349519.LCK_00701"/>
<dbReference type="KEGG" id="lci:LCK_00701"/>
<dbReference type="eggNOG" id="COG0128">
    <property type="taxonomic scope" value="Bacteria"/>
</dbReference>
<dbReference type="HOGENOM" id="CLU_024321_0_1_9"/>
<dbReference type="OrthoDB" id="9809920at2"/>
<dbReference type="UniPathway" id="UPA00053">
    <property type="reaction ID" value="UER00089"/>
</dbReference>
<dbReference type="Proteomes" id="UP000002166">
    <property type="component" value="Chromosome"/>
</dbReference>
<dbReference type="GO" id="GO:0005737">
    <property type="term" value="C:cytoplasm"/>
    <property type="evidence" value="ECO:0007669"/>
    <property type="project" value="UniProtKB-SubCell"/>
</dbReference>
<dbReference type="GO" id="GO:0003866">
    <property type="term" value="F:3-phosphoshikimate 1-carboxyvinyltransferase activity"/>
    <property type="evidence" value="ECO:0007669"/>
    <property type="project" value="UniProtKB-UniRule"/>
</dbReference>
<dbReference type="GO" id="GO:0008652">
    <property type="term" value="P:amino acid biosynthetic process"/>
    <property type="evidence" value="ECO:0007669"/>
    <property type="project" value="UniProtKB-KW"/>
</dbReference>
<dbReference type="GO" id="GO:0009073">
    <property type="term" value="P:aromatic amino acid family biosynthetic process"/>
    <property type="evidence" value="ECO:0007669"/>
    <property type="project" value="UniProtKB-KW"/>
</dbReference>
<dbReference type="GO" id="GO:0009423">
    <property type="term" value="P:chorismate biosynthetic process"/>
    <property type="evidence" value="ECO:0007669"/>
    <property type="project" value="UniProtKB-UniRule"/>
</dbReference>
<dbReference type="CDD" id="cd01556">
    <property type="entry name" value="EPSP_synthase"/>
    <property type="match status" value="1"/>
</dbReference>
<dbReference type="FunFam" id="3.65.10.10:FF:000005">
    <property type="entry name" value="3-phosphoshikimate 1-carboxyvinyltransferase"/>
    <property type="match status" value="1"/>
</dbReference>
<dbReference type="FunFam" id="3.65.10.10:FF:000006">
    <property type="entry name" value="3-phosphoshikimate 1-carboxyvinyltransferase"/>
    <property type="match status" value="1"/>
</dbReference>
<dbReference type="Gene3D" id="3.65.10.10">
    <property type="entry name" value="Enolpyruvate transferase domain"/>
    <property type="match status" value="2"/>
</dbReference>
<dbReference type="HAMAP" id="MF_00210">
    <property type="entry name" value="EPSP_synth"/>
    <property type="match status" value="1"/>
</dbReference>
<dbReference type="InterPro" id="IPR001986">
    <property type="entry name" value="Enolpyruvate_Tfrase_dom"/>
</dbReference>
<dbReference type="InterPro" id="IPR036968">
    <property type="entry name" value="Enolpyruvate_Tfrase_sf"/>
</dbReference>
<dbReference type="InterPro" id="IPR006264">
    <property type="entry name" value="EPSP_synthase"/>
</dbReference>
<dbReference type="InterPro" id="IPR023193">
    <property type="entry name" value="EPSP_synthase_CS"/>
</dbReference>
<dbReference type="InterPro" id="IPR013792">
    <property type="entry name" value="RNA3'P_cycl/enolpyr_Trfase_a/b"/>
</dbReference>
<dbReference type="NCBIfam" id="TIGR01356">
    <property type="entry name" value="aroA"/>
    <property type="match status" value="1"/>
</dbReference>
<dbReference type="PANTHER" id="PTHR21090">
    <property type="entry name" value="AROM/DEHYDROQUINATE SYNTHASE"/>
    <property type="match status" value="1"/>
</dbReference>
<dbReference type="PANTHER" id="PTHR21090:SF5">
    <property type="entry name" value="PENTAFUNCTIONAL AROM POLYPEPTIDE"/>
    <property type="match status" value="1"/>
</dbReference>
<dbReference type="Pfam" id="PF00275">
    <property type="entry name" value="EPSP_synthase"/>
    <property type="match status" value="1"/>
</dbReference>
<dbReference type="PIRSF" id="PIRSF000505">
    <property type="entry name" value="EPSPS"/>
    <property type="match status" value="1"/>
</dbReference>
<dbReference type="SUPFAM" id="SSF55205">
    <property type="entry name" value="EPT/RTPC-like"/>
    <property type="match status" value="1"/>
</dbReference>
<dbReference type="PROSITE" id="PS00104">
    <property type="entry name" value="EPSP_SYNTHASE_1"/>
    <property type="match status" value="1"/>
</dbReference>
<dbReference type="PROSITE" id="PS00885">
    <property type="entry name" value="EPSP_SYNTHASE_2"/>
    <property type="match status" value="1"/>
</dbReference>
<feature type="chain" id="PRO_1000099715" description="3-phosphoshikimate 1-carboxyvinyltransferase">
    <location>
        <begin position="1"/>
        <end position="431"/>
    </location>
</feature>
<feature type="active site" description="Proton acceptor" evidence="1">
    <location>
        <position position="314"/>
    </location>
</feature>
<feature type="binding site" evidence="1">
    <location>
        <position position="22"/>
    </location>
    <ligand>
        <name>3-phosphoshikimate</name>
        <dbReference type="ChEBI" id="CHEBI:145989"/>
    </ligand>
</feature>
<feature type="binding site" evidence="1">
    <location>
        <position position="22"/>
    </location>
    <ligand>
        <name>phosphoenolpyruvate</name>
        <dbReference type="ChEBI" id="CHEBI:58702"/>
    </ligand>
</feature>
<feature type="binding site" evidence="1">
    <location>
        <position position="23"/>
    </location>
    <ligand>
        <name>3-phosphoshikimate</name>
        <dbReference type="ChEBI" id="CHEBI:145989"/>
    </ligand>
</feature>
<feature type="binding site" evidence="1">
    <location>
        <position position="27"/>
    </location>
    <ligand>
        <name>3-phosphoshikimate</name>
        <dbReference type="ChEBI" id="CHEBI:145989"/>
    </ligand>
</feature>
<feature type="binding site" evidence="1">
    <location>
        <position position="94"/>
    </location>
    <ligand>
        <name>phosphoenolpyruvate</name>
        <dbReference type="ChEBI" id="CHEBI:58702"/>
    </ligand>
</feature>
<feature type="binding site" evidence="1">
    <location>
        <position position="122"/>
    </location>
    <ligand>
        <name>phosphoenolpyruvate</name>
        <dbReference type="ChEBI" id="CHEBI:58702"/>
    </ligand>
</feature>
<feature type="binding site" evidence="1">
    <location>
        <position position="167"/>
    </location>
    <ligand>
        <name>3-phosphoshikimate</name>
        <dbReference type="ChEBI" id="CHEBI:145989"/>
    </ligand>
</feature>
<feature type="binding site" evidence="1">
    <location>
        <position position="169"/>
    </location>
    <ligand>
        <name>3-phosphoshikimate</name>
        <dbReference type="ChEBI" id="CHEBI:145989"/>
    </ligand>
</feature>
<feature type="binding site" evidence="1">
    <location>
        <position position="169"/>
    </location>
    <ligand>
        <name>phosphoenolpyruvate</name>
        <dbReference type="ChEBI" id="CHEBI:58702"/>
    </ligand>
</feature>
<feature type="binding site" evidence="1">
    <location>
        <position position="314"/>
    </location>
    <ligand>
        <name>3-phosphoshikimate</name>
        <dbReference type="ChEBI" id="CHEBI:145989"/>
    </ligand>
</feature>
<feature type="binding site" evidence="1">
    <location>
        <position position="341"/>
    </location>
    <ligand>
        <name>3-phosphoshikimate</name>
        <dbReference type="ChEBI" id="CHEBI:145989"/>
    </ligand>
</feature>
<feature type="binding site" evidence="1">
    <location>
        <position position="345"/>
    </location>
    <ligand>
        <name>phosphoenolpyruvate</name>
        <dbReference type="ChEBI" id="CHEBI:58702"/>
    </ligand>
</feature>
<feature type="binding site" evidence="1">
    <location>
        <position position="391"/>
    </location>
    <ligand>
        <name>phosphoenolpyruvate</name>
        <dbReference type="ChEBI" id="CHEBI:58702"/>
    </ligand>
</feature>
<reference key="1">
    <citation type="journal article" date="2008" name="J. Bacteriol.">
        <title>Complete genome sequence of Leuconostoc citreum KM20.</title>
        <authorList>
            <person name="Kim J.F."/>
            <person name="Jeong H."/>
            <person name="Lee J.-S."/>
            <person name="Choi S.-H."/>
            <person name="Ha M."/>
            <person name="Hur C.-G."/>
            <person name="Kim J.-S."/>
            <person name="Lee S."/>
            <person name="Park H.-S."/>
            <person name="Park Y.-H."/>
            <person name="Oh T.K."/>
        </authorList>
    </citation>
    <scope>NUCLEOTIDE SEQUENCE [LARGE SCALE GENOMIC DNA]</scope>
    <source>
        <strain>KM20</strain>
    </source>
</reference>
<sequence length="431" mass="45796">MIRLTPASAHGLHGHVTVPGDKSISHRALMFGAIAKGQTVITNFLASDDVLHTMTVFRNLGVAIQQNENSVRIQGQGFDGLTPPKKPLDMGNSGTSTRLLMGLLSKQNFDMSIIGDESLSQRPMTRVMKPLTEMGAKIDLTANGTLPGIIQANATLRGITYDMPVASAQVKSAILLAGIQAEGETCVIEKIASRDHTERMLRQFGGQLESKNGVITLKKQQQLQGQHVDVPADISSAAFFLVAALITPNSELTINRVGINPTRDGILKILTRMGASIEVTPIDTQGEPLADLTVRTQTLHGIDITAADIPSAVDELPIIALAATQADGDTIISGAEELRVKETDRIATVISELSKLGANIEEKPDGMIIHGGQSLTADNDAVLLDSCGDHRIAMMNAIAALITTGDVILTGEDAMSVSYPGFLEDLSEVML</sequence>
<organism>
    <name type="scientific">Leuconostoc citreum (strain KM20)</name>
    <dbReference type="NCBI Taxonomy" id="349519"/>
    <lineage>
        <taxon>Bacteria</taxon>
        <taxon>Bacillati</taxon>
        <taxon>Bacillota</taxon>
        <taxon>Bacilli</taxon>
        <taxon>Lactobacillales</taxon>
        <taxon>Lactobacillaceae</taxon>
        <taxon>Leuconostoc</taxon>
    </lineage>
</organism>
<accession>B1MYD1</accession>
<comment type="function">
    <text evidence="1">Catalyzes the transfer of the enolpyruvyl moiety of phosphoenolpyruvate (PEP) to the 5-hydroxyl of shikimate-3-phosphate (S3P) to produce enolpyruvyl shikimate-3-phosphate and inorganic phosphate.</text>
</comment>
<comment type="catalytic activity">
    <reaction evidence="1">
        <text>3-phosphoshikimate + phosphoenolpyruvate = 5-O-(1-carboxyvinyl)-3-phosphoshikimate + phosphate</text>
        <dbReference type="Rhea" id="RHEA:21256"/>
        <dbReference type="ChEBI" id="CHEBI:43474"/>
        <dbReference type="ChEBI" id="CHEBI:57701"/>
        <dbReference type="ChEBI" id="CHEBI:58702"/>
        <dbReference type="ChEBI" id="CHEBI:145989"/>
        <dbReference type="EC" id="2.5.1.19"/>
    </reaction>
    <physiologicalReaction direction="left-to-right" evidence="1">
        <dbReference type="Rhea" id="RHEA:21257"/>
    </physiologicalReaction>
</comment>
<comment type="pathway">
    <text evidence="1">Metabolic intermediate biosynthesis; chorismate biosynthesis; chorismate from D-erythrose 4-phosphate and phosphoenolpyruvate: step 6/7.</text>
</comment>
<comment type="subunit">
    <text evidence="1">Monomer.</text>
</comment>
<comment type="subcellular location">
    <subcellularLocation>
        <location evidence="1">Cytoplasm</location>
    </subcellularLocation>
</comment>
<comment type="similarity">
    <text evidence="1">Belongs to the EPSP synthase family.</text>
</comment>
<keyword id="KW-0028">Amino-acid biosynthesis</keyword>
<keyword id="KW-0057">Aromatic amino acid biosynthesis</keyword>
<keyword id="KW-0963">Cytoplasm</keyword>
<keyword id="KW-1185">Reference proteome</keyword>
<keyword id="KW-0808">Transferase</keyword>
<protein>
    <recommendedName>
        <fullName evidence="1">3-phosphoshikimate 1-carboxyvinyltransferase</fullName>
        <ecNumber evidence="1">2.5.1.19</ecNumber>
    </recommendedName>
    <alternativeName>
        <fullName evidence="1">5-enolpyruvylshikimate-3-phosphate synthase</fullName>
        <shortName evidence="1">EPSP synthase</shortName>
        <shortName evidence="1">EPSPS</shortName>
    </alternativeName>
</protein>
<gene>
    <name evidence="1" type="primary">aroA</name>
    <name type="ordered locus">LCK_00701</name>
</gene>
<name>AROA_LEUCK</name>
<proteinExistence type="inferred from homology"/>
<evidence type="ECO:0000255" key="1">
    <source>
        <dbReference type="HAMAP-Rule" id="MF_00210"/>
    </source>
</evidence>